<proteinExistence type="inferred from homology"/>
<keyword id="KW-0007">Acetylation</keyword>
<keyword id="KW-0010">Activator</keyword>
<keyword id="KW-0014">AIDS</keyword>
<keyword id="KW-0025">Alternative splicing</keyword>
<keyword id="KW-0053">Apoptosis</keyword>
<keyword id="KW-1035">Host cytoplasm</keyword>
<keyword id="KW-1048">Host nucleus</keyword>
<keyword id="KW-0945">Host-virus interaction</keyword>
<keyword id="KW-1090">Inhibition of host innate immune response by virus</keyword>
<keyword id="KW-1114">Inhibition of host interferon signaling pathway by virus</keyword>
<keyword id="KW-0922">Interferon antiviral system evasion</keyword>
<keyword id="KW-1017">Isopeptide bond</keyword>
<keyword id="KW-0479">Metal-binding</keyword>
<keyword id="KW-0488">Methylation</keyword>
<keyword id="KW-1122">Modulation of host chromatin by virus</keyword>
<keyword id="KW-1126">Modulation of host PP1 activity by virus</keyword>
<keyword id="KW-0597">Phosphoprotein</keyword>
<keyword id="KW-0694">RNA-binding</keyword>
<keyword id="KW-0964">Secreted</keyword>
<keyword id="KW-0804">Transcription</keyword>
<keyword id="KW-0805">Transcription regulation</keyword>
<keyword id="KW-0832">Ubl conjugation</keyword>
<keyword id="KW-0899">Viral immunoevasion</keyword>
<keyword id="KW-0862">Zinc</keyword>
<organismHost>
    <name type="scientific">Homo sapiens</name>
    <name type="common">Human</name>
    <dbReference type="NCBI Taxonomy" id="9606"/>
</organismHost>
<dbReference type="EMBL" id="M17450">
    <property type="protein sequence ID" value="AAA45060.1"/>
    <property type="molecule type" value="Genomic_RNA"/>
</dbReference>
<dbReference type="SMR" id="P05906"/>
<dbReference type="GO" id="GO:0005576">
    <property type="term" value="C:extracellular region"/>
    <property type="evidence" value="ECO:0007669"/>
    <property type="project" value="UniProtKB-SubCell"/>
</dbReference>
<dbReference type="GO" id="GO:0030430">
    <property type="term" value="C:host cell cytoplasm"/>
    <property type="evidence" value="ECO:0007669"/>
    <property type="project" value="UniProtKB-SubCell"/>
</dbReference>
<dbReference type="GO" id="GO:0044196">
    <property type="term" value="C:host cell nucleolus"/>
    <property type="evidence" value="ECO:0007669"/>
    <property type="project" value="UniProtKB-SubCell"/>
</dbReference>
<dbReference type="GO" id="GO:0042805">
    <property type="term" value="F:actinin binding"/>
    <property type="evidence" value="ECO:0007669"/>
    <property type="project" value="UniProtKB-UniRule"/>
</dbReference>
<dbReference type="GO" id="GO:0030332">
    <property type="term" value="F:cyclin binding"/>
    <property type="evidence" value="ECO:0007669"/>
    <property type="project" value="UniProtKB-UniRule"/>
</dbReference>
<dbReference type="GO" id="GO:0046872">
    <property type="term" value="F:metal ion binding"/>
    <property type="evidence" value="ECO:0007669"/>
    <property type="project" value="UniProtKB-UniRule"/>
</dbReference>
<dbReference type="GO" id="GO:0019904">
    <property type="term" value="F:protein domain specific binding"/>
    <property type="evidence" value="ECO:0007669"/>
    <property type="project" value="UniProtKB-UniRule"/>
</dbReference>
<dbReference type="GO" id="GO:0004865">
    <property type="term" value="F:protein serine/threonine phosphatase inhibitor activity"/>
    <property type="evidence" value="ECO:0007669"/>
    <property type="project" value="UniProtKB-KW"/>
</dbReference>
<dbReference type="GO" id="GO:0001070">
    <property type="term" value="F:RNA-binding transcription regulator activity"/>
    <property type="evidence" value="ECO:0007669"/>
    <property type="project" value="UniProtKB-UniRule"/>
</dbReference>
<dbReference type="GO" id="GO:1990970">
    <property type="term" value="F:trans-activation response element binding"/>
    <property type="evidence" value="ECO:0007669"/>
    <property type="project" value="UniProtKB-UniRule"/>
</dbReference>
<dbReference type="GO" id="GO:0006351">
    <property type="term" value="P:DNA-templated transcription"/>
    <property type="evidence" value="ECO:0007669"/>
    <property type="project" value="UniProtKB-UniRule"/>
</dbReference>
<dbReference type="GO" id="GO:0032968">
    <property type="term" value="P:positive regulation of transcription elongation by RNA polymerase II"/>
    <property type="evidence" value="ECO:0007669"/>
    <property type="project" value="UniProtKB-UniRule"/>
</dbReference>
<dbReference type="GO" id="GO:0050434">
    <property type="term" value="P:positive regulation of viral transcription"/>
    <property type="evidence" value="ECO:0007669"/>
    <property type="project" value="UniProtKB-UniRule"/>
</dbReference>
<dbReference type="GO" id="GO:0039525">
    <property type="term" value="P:symbiont-mediated perturbation of host chromatin organization"/>
    <property type="evidence" value="ECO:0007669"/>
    <property type="project" value="UniProtKB-UniRule"/>
</dbReference>
<dbReference type="GO" id="GO:0052170">
    <property type="term" value="P:symbiont-mediated suppression of host innate immune response"/>
    <property type="evidence" value="ECO:0007669"/>
    <property type="project" value="UniProtKB-KW"/>
</dbReference>
<dbReference type="GO" id="GO:0039606">
    <property type="term" value="P:symbiont-mediated suppression of host translation initiation"/>
    <property type="evidence" value="ECO:0007669"/>
    <property type="project" value="UniProtKB-KW"/>
</dbReference>
<dbReference type="GO" id="GO:0039502">
    <property type="term" value="P:symbiont-mediated suppression of host type I interferon-mediated signaling pathway"/>
    <property type="evidence" value="ECO:0007669"/>
    <property type="project" value="UniProtKB-UniRule"/>
</dbReference>
<dbReference type="FunFam" id="4.10.20.10:FF:000001">
    <property type="entry name" value="Protein Tat"/>
    <property type="match status" value="1"/>
</dbReference>
<dbReference type="Gene3D" id="4.10.20.10">
    <property type="entry name" value="Tat domain"/>
    <property type="match status" value="1"/>
</dbReference>
<dbReference type="HAMAP" id="MF_04079">
    <property type="entry name" value="HIV_TAT"/>
    <property type="match status" value="1"/>
</dbReference>
<dbReference type="InterPro" id="IPR001831">
    <property type="entry name" value="IV_Tat"/>
</dbReference>
<dbReference type="InterPro" id="IPR036963">
    <property type="entry name" value="Tat_dom_sf"/>
</dbReference>
<dbReference type="Pfam" id="PF00539">
    <property type="entry name" value="Tat"/>
    <property type="match status" value="1"/>
</dbReference>
<dbReference type="PRINTS" id="PR00055">
    <property type="entry name" value="HIVTATDOMAIN"/>
</dbReference>
<sequence>MDPVDPRLEPWKHPGSQPKAACTSCYCKKCCFHCQVCFTTKGLGISYGRKKRRQRRRAPQDSQTHQVSLPKQPASQARGDPTGPKESKKKVERETETDPVD</sequence>
<feature type="chain" id="PRO_0000085361" description="Protein Tat">
    <location>
        <begin position="1"/>
        <end position="101"/>
    </location>
</feature>
<feature type="region of interest" description="Transactivation" evidence="1">
    <location>
        <begin position="1"/>
        <end position="48"/>
    </location>
</feature>
<feature type="region of interest" description="Interaction with human CREBBP" evidence="1">
    <location>
        <begin position="1"/>
        <end position="24"/>
    </location>
</feature>
<feature type="region of interest" description="Disordered" evidence="2">
    <location>
        <begin position="1"/>
        <end position="20"/>
    </location>
</feature>
<feature type="region of interest" description="Cysteine-rich" evidence="1">
    <location>
        <begin position="22"/>
        <end position="37"/>
    </location>
</feature>
<feature type="region of interest" description="Core" evidence="1">
    <location>
        <begin position="38"/>
        <end position="48"/>
    </location>
</feature>
<feature type="region of interest" description="Disordered" evidence="2">
    <location>
        <begin position="48"/>
        <end position="101"/>
    </location>
</feature>
<feature type="region of interest" description="Interaction with the host capping enzyme RNGTT" evidence="1">
    <location>
        <begin position="49"/>
        <end position="86"/>
    </location>
</feature>
<feature type="short sequence motif" description="Nuclear localization signal, RNA-binding (TAR), and protein transduction" evidence="1">
    <location>
        <begin position="49"/>
        <end position="57"/>
    </location>
</feature>
<feature type="short sequence motif" description="Cell attachment site" evidence="1">
    <location>
        <begin position="78"/>
        <end position="80"/>
    </location>
</feature>
<feature type="compositionally biased region" description="Basic and acidic residues" evidence="2">
    <location>
        <begin position="1"/>
        <end position="12"/>
    </location>
</feature>
<feature type="compositionally biased region" description="Basic residues" evidence="2">
    <location>
        <begin position="48"/>
        <end position="57"/>
    </location>
</feature>
<feature type="compositionally biased region" description="Polar residues" evidence="2">
    <location>
        <begin position="60"/>
        <end position="75"/>
    </location>
</feature>
<feature type="compositionally biased region" description="Basic and acidic residues" evidence="2">
    <location>
        <begin position="83"/>
        <end position="101"/>
    </location>
</feature>
<feature type="binding site" evidence="1">
    <location>
        <position position="22"/>
    </location>
    <ligand>
        <name>Zn(2+)</name>
        <dbReference type="ChEBI" id="CHEBI:29105"/>
        <label>1</label>
    </ligand>
</feature>
<feature type="binding site" evidence="1">
    <location>
        <position position="25"/>
    </location>
    <ligand>
        <name>Zn(2+)</name>
        <dbReference type="ChEBI" id="CHEBI:29105"/>
        <label>2</label>
    </ligand>
</feature>
<feature type="binding site" evidence="1">
    <location>
        <position position="27"/>
    </location>
    <ligand>
        <name>Zn(2+)</name>
        <dbReference type="ChEBI" id="CHEBI:29105"/>
        <label>2</label>
    </ligand>
</feature>
<feature type="binding site" evidence="1">
    <location>
        <position position="30"/>
    </location>
    <ligand>
        <name>Zn(2+)</name>
        <dbReference type="ChEBI" id="CHEBI:29105"/>
        <label>2</label>
    </ligand>
</feature>
<feature type="binding site" evidence="1">
    <location>
        <position position="33"/>
    </location>
    <ligand>
        <name>Zn(2+)</name>
        <dbReference type="ChEBI" id="CHEBI:29105"/>
        <label>1</label>
    </ligand>
</feature>
<feature type="binding site" evidence="1">
    <location>
        <position position="34"/>
    </location>
    <ligand>
        <name>Zn(2+)</name>
        <dbReference type="ChEBI" id="CHEBI:29105"/>
        <label>1</label>
    </ligand>
</feature>
<feature type="binding site" evidence="1">
    <location>
        <position position="37"/>
    </location>
    <ligand>
        <name>Zn(2+)</name>
        <dbReference type="ChEBI" id="CHEBI:29105"/>
        <label>1</label>
    </ligand>
</feature>
<feature type="site" description="Essential for Tat translocation through the endosomal membrane" evidence="1">
    <location>
        <position position="11"/>
    </location>
</feature>
<feature type="modified residue" description="N6-acetyllysine; by host PCAF" evidence="1">
    <location>
        <position position="28"/>
    </location>
</feature>
<feature type="modified residue" description="N6-acetyllysine; by host EP300 and GCN5L2" evidence="1">
    <location>
        <position position="50"/>
    </location>
</feature>
<feature type="modified residue" description="N6-acetyllysine; by host EP300 and GCN5L2" evidence="1">
    <location>
        <position position="51"/>
    </location>
</feature>
<feature type="modified residue" description="Asymmetric dimethylarginine; by host PRMT6" evidence="1">
    <location>
        <position position="52"/>
    </location>
</feature>
<feature type="modified residue" description="Asymmetric dimethylarginine; by host PRMT6" evidence="1">
    <location>
        <position position="53"/>
    </location>
</feature>
<feature type="cross-link" description="Glycyl lysine isopeptide (Lys-Gly) (interchain with G-Cter in ubiquitin)" evidence="1">
    <location>
        <position position="71"/>
    </location>
</feature>
<feature type="splice variant" id="VSP_022423" description="In isoform Short.">
    <location>
        <begin position="73"/>
        <end position="101"/>
    </location>
</feature>
<accession>P05906</accession>
<name>TAT_HV1SC</name>
<evidence type="ECO:0000255" key="1">
    <source>
        <dbReference type="HAMAP-Rule" id="MF_04079"/>
    </source>
</evidence>
<evidence type="ECO:0000256" key="2">
    <source>
        <dbReference type="SAM" id="MobiDB-lite"/>
    </source>
</evidence>
<evidence type="ECO:0000305" key="3"/>
<organism>
    <name type="scientific">Human immunodeficiency virus type 1 group M subtype B (isolate SC)</name>
    <name type="common">HIV-1</name>
    <dbReference type="NCBI Taxonomy" id="11702"/>
    <lineage>
        <taxon>Viruses</taxon>
        <taxon>Riboviria</taxon>
        <taxon>Pararnavirae</taxon>
        <taxon>Artverviricota</taxon>
        <taxon>Revtraviricetes</taxon>
        <taxon>Ortervirales</taxon>
        <taxon>Retroviridae</taxon>
        <taxon>Orthoretrovirinae</taxon>
        <taxon>Lentivirus</taxon>
        <taxon>Human immunodeficiency virus type 1</taxon>
    </lineage>
</organism>
<reference key="1">
    <citation type="journal article" date="1988" name="Virology">
        <title>Envelope sequences of two new United States HIV-1 isolates.</title>
        <authorList>
            <person name="Gurgo C."/>
            <person name="Guo H.-G."/>
            <person name="Franchini G."/>
            <person name="Aldovini A."/>
            <person name="Collalti E."/>
            <person name="Farrell K."/>
            <person name="Wong-Staal F."/>
            <person name="Gallo R.C."/>
            <person name="Reitz M.S. Jr."/>
        </authorList>
    </citation>
    <scope>NUCLEOTIDE SEQUENCE [GENOMIC RNA]</scope>
</reference>
<reference key="2">
    <citation type="journal article" date="2005" name="Microbes Infect.">
        <title>Decoding Tat: the biology of HIV Tat posttranslational modifications.</title>
        <authorList>
            <person name="Hetzer C."/>
            <person name="Dormeyer W."/>
            <person name="Schnolzer M."/>
            <person name="Ott M."/>
        </authorList>
    </citation>
    <scope>REVIEW</scope>
    <scope>ALTERNATIVE SPLICING</scope>
</reference>
<reference key="3">
    <citation type="journal article" date="2006" name="Front. Biosci.">
        <title>The multiple functions of HIV-1 Tat: proliferation versus apoptosis.</title>
        <authorList>
            <person name="Peruzzi F."/>
        </authorList>
    </citation>
    <scope>REVIEW</scope>
</reference>
<reference key="4">
    <citation type="journal article" date="2006" name="Microbes Infect.">
        <title>HIV tat and neurotoxicity.</title>
        <authorList>
            <person name="King J.E."/>
            <person name="Eugenin E.A."/>
            <person name="Buckner C.M."/>
            <person name="Berman J.W."/>
        </authorList>
    </citation>
    <scope>REVIEW</scope>
</reference>
<comment type="function">
    <text evidence="1">Transcriptional activator that increases RNA Pol II processivity, thereby increasing the level of full-length viral transcripts. Recognizes a hairpin structure at the 5'-LTR of the nascent viral mRNAs referred to as the transactivation responsive RNA element (TAR) and recruits the cyclin T1-CDK9 complex (P-TEFb complex) that will in turn hyperphosphorylate the RNA polymerase II to allow efficient elongation. The CDK9 component of P-TEFb and other Tat-activated kinases hyperphosphorylate the C-terminus of RNA Pol II that becomes stabilized and much more processive. Other factors such as HTATSF1/Tat-SF1, SUPT5H/SPT5, and HTATIP2 are also important for Tat's function. Besides its effect on RNA Pol II processivity, Tat induces chromatin remodeling of proviral genes by recruiting the histone acetyltransferases (HATs) CREBBP, EP300 and PCAF to the chromatin. This also contributes to the increase in proviral transcription rate, especially when the provirus integrates in transcriptionally silent region of the host genome. To ensure maximal activation of the LTR, Tat mediates nuclear translocation of NF-kappa-B by interacting with host RELA. Through its interaction with host TBP, Tat may also modulate transcription initiation. Tat can reactivate a latently infected cell by penetrating in it and transactivating its LTR promoter. In the cytoplasm, Tat is thought to act as a translational activator of HIV-1 mRNAs.</text>
</comment>
<comment type="function">
    <text evidence="1">Extracellular circulating Tat can be endocytosed by surrounding uninfected cells via the binding to several surface receptors such as CD26, CXCR4, heparan sulfate proteoglycans (HSPG) or LDLR. Neurons are rarely infected, but they internalize Tat via their LDLR. Through its interaction with nuclear HATs, Tat is potentially able to control the acetylation-dependent cellular gene expression. Modulates the expression of many cellular genes involved in cell survival, proliferation or in coding for cytokines or cytokine receptors. Tat plays a role in T-cell and neurons apoptosis. Tat induced neurotoxicity and apoptosis probably contribute to neuroAIDS. Circulating Tat also acts as a chemokine-like and/or growth factor-like molecule that binds to specific receptors on the surface of the cells, affecting many cellular pathways. In the vascular system, Tat binds to ITGAV/ITGB3 and ITGA5/ITGB1 integrins dimers at the surface of endothelial cells and competes with bFGF for heparin-binding sites, leading to an excess of soluble bFGF.</text>
</comment>
<comment type="subunit">
    <text evidence="1">Interacts with host CCNT1. Associates with the P-TEFb complex composed at least of Tat, P-TEFb (CDK9 and CCNT1), TAR RNA, RNA Pol II. Recruits the HATs CREBBP, TAF1/TFIID, EP300, PCAF and GCN5L2. Interacts with host KAT5/Tip60; this interaction targets the latter to degradation. Interacts with the host deacetylase SIRT1. Interacts with host capping enzyme RNGTT; this interaction stimulates RNGTT. Binds to host KDR, and to the host integrins ITGAV/ITGB3 and ITGA5/ITGB1. Interacts with host KPNB1/importin beta-1 without previous binding to KPNA1/importin alpha-1. Interacts with EIF2AK2. Interacts with host nucleosome assembly protein NAP1L1; this interaction may be required for the transport of Tat within the nucleus, since the two proteins interact at the nuclear rim. Interacts with host C1QBP/SF2P32; this interaction involves lysine-acetylated Tat. Interacts with the host chemokine receptors CCR2, CCR3 and CXCR4. Interacts with host DPP4/CD26; this interaction may trigger an anti-proliferative effect. Interacts with host LDLR. Interacts with the host extracellular matrix metalloproteinase MMP1. Interacts with host PRMT6; this interaction mediates Tat's methylation. Interacts with, and is ubiquitinated by MDM2/Hdm2. Interacts with host PSMC3 and HTATIP2. Interacts with STAB1; this interaction may overcome SATB1-mediated repression of IL2 and IL2RA (interleukin) in T cells by binding to the same domain than HDAC1. Interacts (when acetylated) with human CDK13, thereby increasing HIV-1 mRNA splicing and promoting the production of the doubly spliced HIV-1 protein Nef. Interacts with host TBP; this interaction modulates the activity of transcriptional pre-initiation complex. Interacts with host RELA. Interacts with host PLSCR1; this interaction negatively regulates Tat transactivation activity by altering its subcellular distribution.</text>
</comment>
<comment type="subcellular location">
    <subcellularLocation>
        <location evidence="1">Host nucleus</location>
        <location evidence="1">Host nucleolus</location>
    </subcellularLocation>
    <subcellularLocation>
        <location evidence="1">Host cytoplasm</location>
    </subcellularLocation>
    <subcellularLocation>
        <location evidence="1">Secreted</location>
    </subcellularLocation>
    <text evidence="1">Probably localizes to both nuclear and nucleolar compartments. Nuclear localization is mediated through the interaction of the nuclear localization signal with importin KPNB1. Secretion occurs through a Golgi-independent pathway. Tat is released from infected cells to the extracellular space where it remains associated to the cell membrane, or is secreted into the cerebrospinal fluid and sera. Extracellular Tat can be endocytosed by surrounding uninfected cells via binding to several receptors depending on the cell type.</text>
</comment>
<comment type="alternative products">
    <event type="alternative splicing"/>
    <isoform>
        <id>P05906-1</id>
        <name>Long</name>
        <sequence type="displayed"/>
    </isoform>
    <isoform>
        <id>P05906-2</id>
        <name>Short</name>
        <sequence type="described" ref="VSP_022423"/>
    </isoform>
</comment>
<comment type="domain">
    <text evidence="1">The cell attachment site mediates the interaction with ITGAV/ITGB3 and ITGA5/ITGB1 integrins, leading to vascular cell migration and invasion. This interaction also provides endothelial cells with the adhesion signal they require to grow in response to mitogens.</text>
</comment>
<comment type="domain">
    <text evidence="1">The Cys-rich region may bind 2 zinc ions. This region is involved in binding to KAT5.</text>
</comment>
<comment type="domain">
    <text evidence="1">The transactivation domain mediates the interaction with CCNT1, GCN5L2, and MDM2.</text>
</comment>
<comment type="domain">
    <text evidence="1">The Arg-rich RNA-binding region binds the TAR RNA. This region also mediates the nuclear localization through direct binding to KPNB1 and is involved in Tat's transfer across cell membranes (protein transduction). The same region is required for the interaction with EP300, PCAF, EIF2AK2 and KDR.</text>
</comment>
<comment type="PTM">
    <text evidence="1">Asymmetrical arginine methylation by host PRMT6 seems to diminish the transactivation capacity of Tat and affects the interaction with host CCNT1.</text>
</comment>
<comment type="PTM">
    <text evidence="1">Acetylation by EP300, CREBBP, GCN5L2/GCN5 and PCAF regulates the transactivation activity of Tat. EP300-mediated acetylation of Lys-50 promotes dissociation of Tat from the TAR RNA through the competitive binding to PCAF's bromodomain. In addition, the non-acetylated Tat's N-terminus can also interact with PCAF. PCAF-mediated acetylation of Lys-28 enhances Tat's binding to CCNT1. Lys-50 is deacetylated by SIRT1.</text>
</comment>
<comment type="PTM">
    <text evidence="1">Polyubiquitination by host MDM2 does not target Tat to degradation, but activates its transactivation function and fosters interaction with CCNT1 and TAR RNA.</text>
</comment>
<comment type="PTM">
    <text evidence="1">Phosphorylated by EIF2AK2 on serine and threonine residues adjacent to the basic region important for TAR RNA binding and function. Phosphorylation of Tat by EIF2AK2 is dependent on the prior activation of EIF2AK2 by dsRNA.</text>
</comment>
<comment type="miscellaneous">
    <text>The SC isolate was taken from an ARC patient in 1984 in Southern California.</text>
</comment>
<comment type="miscellaneous">
    <text evidence="1">HIV-1 lineages are divided in three main groups, M (for Major), O (for Outlier), and N (for New, or Non-M, Non-O). The vast majority of strains found worldwide belong to the group M. Group O seems to be endemic to and largely confined to Cameroon and neighboring countries in West Central Africa, where these viruses represent a small minority of HIV-1 strains. The group N is represented by a limited number of isolates from Cameroonian persons. The group M is further subdivided in 9 clades or subtypes (A to D, F to H, J and K).</text>
</comment>
<comment type="miscellaneous">
    <molecule>Isoform Short</molecule>
    <text evidence="3">Expressed in the late stage of the infection cycle, when unspliced viral RNAs are exported to the cytoplasm by the viral Rev protein.</text>
</comment>
<comment type="similarity">
    <text evidence="1">Belongs to the lentiviruses Tat family.</text>
</comment>
<protein>
    <recommendedName>
        <fullName evidence="1">Protein Tat</fullName>
    </recommendedName>
    <alternativeName>
        <fullName evidence="1">Transactivating regulatory protein</fullName>
    </alternativeName>
</protein>
<gene>
    <name evidence="1" type="primary">tat</name>
</gene>